<reference key="1">
    <citation type="journal article" date="2004" name="Plant Physiol. Biochem.">
        <title>Cloning and over-expression of a cDNA encoding a polyketide synthase from Cannabis sativa.</title>
        <authorList>
            <person name="Raharjo T.J."/>
            <person name="Chang W.T."/>
            <person name="Verberne M.C."/>
            <person name="Peltenburg-Looman A.M."/>
            <person name="Linthorst H.J."/>
            <person name="Verpoorte R."/>
        </authorList>
    </citation>
    <scope>NUCLEOTIDE SEQUENCE [MRNA]</scope>
    <scope>CATALYTIC ACTIVITY</scope>
    <scope>SUBSTRATE SPECIFICITY</scope>
    <scope>TISSUE SPECIFICITY</scope>
    <source>
        <strain>cv. Four-way</strain>
        <tissue>Leaf</tissue>
    </source>
</reference>
<reference key="2">
    <citation type="journal article" date="2009" name="J. Exp. Bot.">
        <title>Identification of candidate genes affecting Delta9-tetrahydrocannabinol biosynthesis in Cannabis sativa.</title>
        <authorList>
            <person name="Marks M.D."/>
            <person name="Tian L."/>
            <person name="Wenger J.P."/>
            <person name="Omburo S.N."/>
            <person name="Soto-Fuentes W."/>
            <person name="He J."/>
            <person name="Gang D.R."/>
            <person name="Weiblen G.D."/>
            <person name="Dixon R.A."/>
        </authorList>
    </citation>
    <scope>NUCLEOTIDE SEQUENCE [MRNA]</scope>
    <scope>CATALYTIC ACTIVITY</scope>
    <scope>SUBSTRATE SPECIFICITY</scope>
    <scope>TISSUE SPECIFICITY</scope>
</reference>
<comment type="function">
    <text>Chalcone synthase that can also use isovaleryl-CoA, isobutyryl-CoA or hexanoyl-CoA as substrates, but that is unable to produce olivetol or olivetolic acid.</text>
</comment>
<comment type="catalytic activity">
    <reaction evidence="1 2 3">
        <text>(E)-4-coumaroyl-CoA + 3 malonyl-CoA + 3 H(+) = 2',4,4',6'-tetrahydroxychalcone + 3 CO2 + 4 CoA</text>
        <dbReference type="Rhea" id="RHEA:11128"/>
        <dbReference type="ChEBI" id="CHEBI:15378"/>
        <dbReference type="ChEBI" id="CHEBI:15413"/>
        <dbReference type="ChEBI" id="CHEBI:16526"/>
        <dbReference type="ChEBI" id="CHEBI:57287"/>
        <dbReference type="ChEBI" id="CHEBI:57384"/>
        <dbReference type="ChEBI" id="CHEBI:85008"/>
        <dbReference type="EC" id="2.3.1.74"/>
    </reaction>
</comment>
<comment type="subcellular location">
    <subcellularLocation>
        <location evidence="4">Cytoplasm</location>
    </subcellularLocation>
</comment>
<comment type="tissue specificity">
    <text evidence="2 3">Expressed in glandular trichomes. Detected at low levels in female flowers, stems, seeds, leaves and roots.</text>
</comment>
<comment type="similarity">
    <text evidence="4">Belongs to the thiolase-like superfamily. Chalcone/stilbene synthases family.</text>
</comment>
<evidence type="ECO:0000255" key="1">
    <source>
        <dbReference type="PROSITE-ProRule" id="PRU10023"/>
    </source>
</evidence>
<evidence type="ECO:0000269" key="2">
    <source>
    </source>
</evidence>
<evidence type="ECO:0000269" key="3">
    <source>
    </source>
</evidence>
<evidence type="ECO:0000305" key="4"/>
<accession>Q8RVK9</accession>
<dbReference type="EC" id="2.3.1.74"/>
<dbReference type="EMBL" id="AY082343">
    <property type="protein sequence ID" value="AAL92879.1"/>
    <property type="molecule type" value="mRNA"/>
</dbReference>
<dbReference type="SMR" id="Q8RVK9"/>
<dbReference type="EnsemblPlants" id="evm.model.07.160">
    <property type="protein sequence ID" value="cds.evm.model.07.160"/>
    <property type="gene ID" value="evm.TU.07.160"/>
</dbReference>
<dbReference type="Gramene" id="evm.model.07.160">
    <property type="protein sequence ID" value="cds.evm.model.07.160"/>
    <property type="gene ID" value="evm.TU.07.160"/>
</dbReference>
<dbReference type="OMA" id="FCEYMAS"/>
<dbReference type="OrthoDB" id="1854138at2759"/>
<dbReference type="BioCyc" id="MetaCyc:MONOMER-12039"/>
<dbReference type="Proteomes" id="UP000596661">
    <property type="component" value="Chromosome 7"/>
</dbReference>
<dbReference type="GO" id="GO:0034081">
    <property type="term" value="C:polyketide synthase complex"/>
    <property type="evidence" value="ECO:0000314"/>
    <property type="project" value="UniProtKB"/>
</dbReference>
<dbReference type="GO" id="GO:0016210">
    <property type="term" value="F:naringenin-chalcone synthase activity"/>
    <property type="evidence" value="ECO:0000314"/>
    <property type="project" value="UniProtKB"/>
</dbReference>
<dbReference type="GO" id="GO:1901696">
    <property type="term" value="P:cannabinoid biosynthetic process"/>
    <property type="evidence" value="ECO:0000303"/>
    <property type="project" value="UniProtKB"/>
</dbReference>
<dbReference type="GO" id="GO:0009715">
    <property type="term" value="P:chalcone biosynthetic process"/>
    <property type="evidence" value="ECO:0000314"/>
    <property type="project" value="UniProtKB"/>
</dbReference>
<dbReference type="GO" id="GO:0030639">
    <property type="term" value="P:polyketide biosynthetic process"/>
    <property type="evidence" value="ECO:0007669"/>
    <property type="project" value="TreeGrafter"/>
</dbReference>
<dbReference type="CDD" id="cd00831">
    <property type="entry name" value="CHS_like"/>
    <property type="match status" value="1"/>
</dbReference>
<dbReference type="FunFam" id="3.40.47.10:FF:000014">
    <property type="entry name" value="Chalcone synthase 1"/>
    <property type="match status" value="1"/>
</dbReference>
<dbReference type="FunFam" id="3.40.47.10:FF:000025">
    <property type="entry name" value="Chalcone synthase 2"/>
    <property type="match status" value="1"/>
</dbReference>
<dbReference type="Gene3D" id="3.40.47.10">
    <property type="match status" value="2"/>
</dbReference>
<dbReference type="InterPro" id="IPR012328">
    <property type="entry name" value="Chalcone/stilbene_synt_C"/>
</dbReference>
<dbReference type="InterPro" id="IPR001099">
    <property type="entry name" value="Chalcone/stilbene_synt_N"/>
</dbReference>
<dbReference type="InterPro" id="IPR018088">
    <property type="entry name" value="Chalcone/stilbene_synthase_AS"/>
</dbReference>
<dbReference type="InterPro" id="IPR011141">
    <property type="entry name" value="Polyketide_synthase_type-III"/>
</dbReference>
<dbReference type="InterPro" id="IPR016039">
    <property type="entry name" value="Thiolase-like"/>
</dbReference>
<dbReference type="PANTHER" id="PTHR11877:SF80">
    <property type="entry name" value="CHALCONE SYNTHASE 1"/>
    <property type="match status" value="1"/>
</dbReference>
<dbReference type="PANTHER" id="PTHR11877">
    <property type="entry name" value="HYDROXYMETHYLGLUTARYL-COA SYNTHASE"/>
    <property type="match status" value="1"/>
</dbReference>
<dbReference type="Pfam" id="PF02797">
    <property type="entry name" value="Chal_sti_synt_C"/>
    <property type="match status" value="1"/>
</dbReference>
<dbReference type="Pfam" id="PF00195">
    <property type="entry name" value="Chal_sti_synt_N"/>
    <property type="match status" value="1"/>
</dbReference>
<dbReference type="PIRSF" id="PIRSF000451">
    <property type="entry name" value="PKS_III"/>
    <property type="match status" value="1"/>
</dbReference>
<dbReference type="SUPFAM" id="SSF53901">
    <property type="entry name" value="Thiolase-like"/>
    <property type="match status" value="2"/>
</dbReference>
<dbReference type="PROSITE" id="PS00441">
    <property type="entry name" value="CHALCONE_SYNTH"/>
    <property type="match status" value="1"/>
</dbReference>
<protein>
    <recommendedName>
        <fullName>Naringenin-chalcone synthase</fullName>
        <ecNumber>2.3.1.74</ecNumber>
    </recommendedName>
</protein>
<keyword id="KW-0012">Acyltransferase</keyword>
<keyword id="KW-0963">Cytoplasm</keyword>
<keyword id="KW-0808">Transferase</keyword>
<feature type="chain" id="PRO_0000421153" description="Naringenin-chalcone synthase">
    <location>
        <begin position="1"/>
        <end position="389"/>
    </location>
</feature>
<feature type="active site" evidence="1">
    <location>
        <position position="164"/>
    </location>
</feature>
<name>CHS_CANSA</name>
<proteinExistence type="evidence at protein level"/>
<gene>
    <name type="primary">CHS</name>
    <name type="synonym">CAN1069</name>
</gene>
<organism>
    <name type="scientific">Cannabis sativa</name>
    <name type="common">Hemp</name>
    <name type="synonym">Marijuana</name>
    <dbReference type="NCBI Taxonomy" id="3483"/>
    <lineage>
        <taxon>Eukaryota</taxon>
        <taxon>Viridiplantae</taxon>
        <taxon>Streptophyta</taxon>
        <taxon>Embryophyta</taxon>
        <taxon>Tracheophyta</taxon>
        <taxon>Spermatophyta</taxon>
        <taxon>Magnoliopsida</taxon>
        <taxon>eudicotyledons</taxon>
        <taxon>Gunneridae</taxon>
        <taxon>Pentapetalae</taxon>
        <taxon>rosids</taxon>
        <taxon>fabids</taxon>
        <taxon>Rosales</taxon>
        <taxon>Cannabaceae</taxon>
        <taxon>Cannabis</taxon>
    </lineage>
</organism>
<sequence length="389" mass="42720">MVTVEEFRKAQRAEGPATIMAIGTATPANCVLQSEYPDYYFRITNSEHKTELKEKFKRMCDKSMIRKRYMHLTEEILKENPNLCAYEAPSLDARQDMVVVEVPKLGKEAATKAIKEWGQPKSKITHLVFCTTSGVDMPGADYQLTKLLGLRPSVKRLMMYQQGCFAGGTVLRLAKDLAENNKGARVLVVCSEITAVTFRGPNDTHLDSLVGQALFGDGSAALIVGSDPIPEVEKPIFELVSAAQTILPDSDGAIDGHLREVGLTFHLLKDVPGLISKNIEKSLNEAFKPLGISDWNSLFWIAHPGGPAILDQVESKLALKTEKLRATRHVLSEYGNMSSACVLFILDEMRRKCVEDGLNTTGEGLEWGVLFGFGPGLTVETVVLHSVAI</sequence>